<dbReference type="EC" id="3.6.4.-" evidence="1"/>
<dbReference type="EMBL" id="CP000507">
    <property type="protein sequence ID" value="ABM00045.1"/>
    <property type="molecule type" value="Genomic_DNA"/>
</dbReference>
<dbReference type="RefSeq" id="WP_011759952.1">
    <property type="nucleotide sequence ID" value="NC_008700.1"/>
</dbReference>
<dbReference type="SMR" id="A1S6N8"/>
<dbReference type="STRING" id="326297.Sama_1839"/>
<dbReference type="KEGG" id="saz:Sama_1839"/>
<dbReference type="eggNOG" id="COG2255">
    <property type="taxonomic scope" value="Bacteria"/>
</dbReference>
<dbReference type="HOGENOM" id="CLU_055599_1_0_6"/>
<dbReference type="OrthoDB" id="9804478at2"/>
<dbReference type="Proteomes" id="UP000009175">
    <property type="component" value="Chromosome"/>
</dbReference>
<dbReference type="GO" id="GO:0005737">
    <property type="term" value="C:cytoplasm"/>
    <property type="evidence" value="ECO:0007669"/>
    <property type="project" value="UniProtKB-SubCell"/>
</dbReference>
<dbReference type="GO" id="GO:0048476">
    <property type="term" value="C:Holliday junction resolvase complex"/>
    <property type="evidence" value="ECO:0007669"/>
    <property type="project" value="UniProtKB-UniRule"/>
</dbReference>
<dbReference type="GO" id="GO:0005524">
    <property type="term" value="F:ATP binding"/>
    <property type="evidence" value="ECO:0007669"/>
    <property type="project" value="UniProtKB-UniRule"/>
</dbReference>
<dbReference type="GO" id="GO:0016887">
    <property type="term" value="F:ATP hydrolysis activity"/>
    <property type="evidence" value="ECO:0007669"/>
    <property type="project" value="InterPro"/>
</dbReference>
<dbReference type="GO" id="GO:0000400">
    <property type="term" value="F:four-way junction DNA binding"/>
    <property type="evidence" value="ECO:0007669"/>
    <property type="project" value="UniProtKB-UniRule"/>
</dbReference>
<dbReference type="GO" id="GO:0009378">
    <property type="term" value="F:four-way junction helicase activity"/>
    <property type="evidence" value="ECO:0007669"/>
    <property type="project" value="InterPro"/>
</dbReference>
<dbReference type="GO" id="GO:0006310">
    <property type="term" value="P:DNA recombination"/>
    <property type="evidence" value="ECO:0007669"/>
    <property type="project" value="UniProtKB-UniRule"/>
</dbReference>
<dbReference type="GO" id="GO:0006281">
    <property type="term" value="P:DNA repair"/>
    <property type="evidence" value="ECO:0007669"/>
    <property type="project" value="UniProtKB-UniRule"/>
</dbReference>
<dbReference type="CDD" id="cd00009">
    <property type="entry name" value="AAA"/>
    <property type="match status" value="1"/>
</dbReference>
<dbReference type="FunFam" id="1.10.10.10:FF:000086">
    <property type="entry name" value="Holliday junction ATP-dependent DNA helicase RuvB"/>
    <property type="match status" value="1"/>
</dbReference>
<dbReference type="FunFam" id="1.10.8.60:FF:000023">
    <property type="entry name" value="Holliday junction ATP-dependent DNA helicase RuvB"/>
    <property type="match status" value="1"/>
</dbReference>
<dbReference type="FunFam" id="3.40.50.300:FF:000073">
    <property type="entry name" value="Holliday junction ATP-dependent DNA helicase RuvB"/>
    <property type="match status" value="1"/>
</dbReference>
<dbReference type="Gene3D" id="1.10.8.60">
    <property type="match status" value="1"/>
</dbReference>
<dbReference type="Gene3D" id="3.40.50.300">
    <property type="entry name" value="P-loop containing nucleotide triphosphate hydrolases"/>
    <property type="match status" value="1"/>
</dbReference>
<dbReference type="Gene3D" id="1.10.10.10">
    <property type="entry name" value="Winged helix-like DNA-binding domain superfamily/Winged helix DNA-binding domain"/>
    <property type="match status" value="1"/>
</dbReference>
<dbReference type="HAMAP" id="MF_00016">
    <property type="entry name" value="DNA_HJ_migration_RuvB"/>
    <property type="match status" value="1"/>
</dbReference>
<dbReference type="InterPro" id="IPR003593">
    <property type="entry name" value="AAA+_ATPase"/>
</dbReference>
<dbReference type="InterPro" id="IPR041445">
    <property type="entry name" value="AAA_lid_4"/>
</dbReference>
<dbReference type="InterPro" id="IPR004605">
    <property type="entry name" value="DNA_helicase_Holl-junc_RuvB"/>
</dbReference>
<dbReference type="InterPro" id="IPR027417">
    <property type="entry name" value="P-loop_NTPase"/>
</dbReference>
<dbReference type="InterPro" id="IPR008824">
    <property type="entry name" value="RuvB-like_N"/>
</dbReference>
<dbReference type="InterPro" id="IPR008823">
    <property type="entry name" value="RuvB_C"/>
</dbReference>
<dbReference type="InterPro" id="IPR036388">
    <property type="entry name" value="WH-like_DNA-bd_sf"/>
</dbReference>
<dbReference type="InterPro" id="IPR036390">
    <property type="entry name" value="WH_DNA-bd_sf"/>
</dbReference>
<dbReference type="NCBIfam" id="NF000868">
    <property type="entry name" value="PRK00080.1"/>
    <property type="match status" value="1"/>
</dbReference>
<dbReference type="NCBIfam" id="TIGR00635">
    <property type="entry name" value="ruvB"/>
    <property type="match status" value="1"/>
</dbReference>
<dbReference type="PANTHER" id="PTHR42848">
    <property type="match status" value="1"/>
</dbReference>
<dbReference type="PANTHER" id="PTHR42848:SF1">
    <property type="entry name" value="HOLLIDAY JUNCTION BRANCH MIGRATION COMPLEX SUBUNIT RUVB"/>
    <property type="match status" value="1"/>
</dbReference>
<dbReference type="Pfam" id="PF17864">
    <property type="entry name" value="AAA_lid_4"/>
    <property type="match status" value="1"/>
</dbReference>
<dbReference type="Pfam" id="PF05491">
    <property type="entry name" value="RuvB_C"/>
    <property type="match status" value="1"/>
</dbReference>
<dbReference type="Pfam" id="PF05496">
    <property type="entry name" value="RuvB_N"/>
    <property type="match status" value="1"/>
</dbReference>
<dbReference type="SMART" id="SM00382">
    <property type="entry name" value="AAA"/>
    <property type="match status" value="1"/>
</dbReference>
<dbReference type="SUPFAM" id="SSF52540">
    <property type="entry name" value="P-loop containing nucleoside triphosphate hydrolases"/>
    <property type="match status" value="1"/>
</dbReference>
<dbReference type="SUPFAM" id="SSF46785">
    <property type="entry name" value="Winged helix' DNA-binding domain"/>
    <property type="match status" value="1"/>
</dbReference>
<feature type="chain" id="PRO_1000001469" description="Holliday junction branch migration complex subunit RuvB">
    <location>
        <begin position="1"/>
        <end position="334"/>
    </location>
</feature>
<feature type="region of interest" description="Large ATPase domain (RuvB-L)" evidence="1">
    <location>
        <begin position="4"/>
        <end position="184"/>
    </location>
</feature>
<feature type="region of interest" description="Small ATPAse domain (RuvB-S)" evidence="1">
    <location>
        <begin position="185"/>
        <end position="255"/>
    </location>
</feature>
<feature type="region of interest" description="Head domain (RuvB-H)" evidence="1">
    <location>
        <begin position="258"/>
        <end position="334"/>
    </location>
</feature>
<feature type="binding site" evidence="1">
    <location>
        <position position="24"/>
    </location>
    <ligand>
        <name>ATP</name>
        <dbReference type="ChEBI" id="CHEBI:30616"/>
    </ligand>
</feature>
<feature type="binding site" evidence="1">
    <location>
        <position position="65"/>
    </location>
    <ligand>
        <name>ATP</name>
        <dbReference type="ChEBI" id="CHEBI:30616"/>
    </ligand>
</feature>
<feature type="binding site" evidence="1">
    <location>
        <position position="68"/>
    </location>
    <ligand>
        <name>ATP</name>
        <dbReference type="ChEBI" id="CHEBI:30616"/>
    </ligand>
</feature>
<feature type="binding site" evidence="1">
    <location>
        <position position="69"/>
    </location>
    <ligand>
        <name>ATP</name>
        <dbReference type="ChEBI" id="CHEBI:30616"/>
    </ligand>
</feature>
<feature type="binding site" evidence="1">
    <location>
        <position position="69"/>
    </location>
    <ligand>
        <name>Mg(2+)</name>
        <dbReference type="ChEBI" id="CHEBI:18420"/>
    </ligand>
</feature>
<feature type="binding site" evidence="1">
    <location>
        <position position="70"/>
    </location>
    <ligand>
        <name>ATP</name>
        <dbReference type="ChEBI" id="CHEBI:30616"/>
    </ligand>
</feature>
<feature type="binding site" evidence="1">
    <location>
        <begin position="131"/>
        <end position="133"/>
    </location>
    <ligand>
        <name>ATP</name>
        <dbReference type="ChEBI" id="CHEBI:30616"/>
    </ligand>
</feature>
<feature type="binding site" evidence="1">
    <location>
        <position position="174"/>
    </location>
    <ligand>
        <name>ATP</name>
        <dbReference type="ChEBI" id="CHEBI:30616"/>
    </ligand>
</feature>
<feature type="binding site" evidence="1">
    <location>
        <position position="184"/>
    </location>
    <ligand>
        <name>ATP</name>
        <dbReference type="ChEBI" id="CHEBI:30616"/>
    </ligand>
</feature>
<feature type="binding site" evidence="1">
    <location>
        <position position="221"/>
    </location>
    <ligand>
        <name>ATP</name>
        <dbReference type="ChEBI" id="CHEBI:30616"/>
    </ligand>
</feature>
<feature type="binding site" evidence="1">
    <location>
        <position position="294"/>
    </location>
    <ligand>
        <name>DNA</name>
        <dbReference type="ChEBI" id="CHEBI:16991"/>
    </ligand>
</feature>
<feature type="binding site" evidence="1">
    <location>
        <position position="313"/>
    </location>
    <ligand>
        <name>DNA</name>
        <dbReference type="ChEBI" id="CHEBI:16991"/>
    </ligand>
</feature>
<feature type="binding site" evidence="1">
    <location>
        <position position="318"/>
    </location>
    <ligand>
        <name>DNA</name>
        <dbReference type="ChEBI" id="CHEBI:16991"/>
    </ligand>
</feature>
<evidence type="ECO:0000255" key="1">
    <source>
        <dbReference type="HAMAP-Rule" id="MF_00016"/>
    </source>
</evidence>
<comment type="function">
    <text evidence="1">The RuvA-RuvB-RuvC complex processes Holliday junction (HJ) DNA during genetic recombination and DNA repair, while the RuvA-RuvB complex plays an important role in the rescue of blocked DNA replication forks via replication fork reversal (RFR). RuvA specifically binds to HJ cruciform DNA, conferring on it an open structure. The RuvB hexamer acts as an ATP-dependent pump, pulling dsDNA into and through the RuvAB complex. RuvB forms 2 homohexamers on either side of HJ DNA bound by 1 or 2 RuvA tetramers; 4 subunits per hexamer contact DNA at a time. Coordinated motions by a converter formed by DNA-disengaged RuvB subunits stimulates ATP hydrolysis and nucleotide exchange. Immobilization of the converter enables RuvB to convert the ATP-contained energy into a lever motion, pulling 2 nucleotides of DNA out of the RuvA tetramer per ATP hydrolyzed, thus driving DNA branch migration. The RuvB motors rotate together with the DNA substrate, which together with the progressing nucleotide cycle form the mechanistic basis for DNA recombination by continuous HJ branch migration. Branch migration allows RuvC to scan DNA until it finds its consensus sequence, where it cleaves and resolves cruciform DNA.</text>
</comment>
<comment type="catalytic activity">
    <reaction evidence="1">
        <text>ATP + H2O = ADP + phosphate + H(+)</text>
        <dbReference type="Rhea" id="RHEA:13065"/>
        <dbReference type="ChEBI" id="CHEBI:15377"/>
        <dbReference type="ChEBI" id="CHEBI:15378"/>
        <dbReference type="ChEBI" id="CHEBI:30616"/>
        <dbReference type="ChEBI" id="CHEBI:43474"/>
        <dbReference type="ChEBI" id="CHEBI:456216"/>
    </reaction>
</comment>
<comment type="subunit">
    <text evidence="1">Homohexamer. Forms an RuvA(8)-RuvB(12)-Holliday junction (HJ) complex. HJ DNA is sandwiched between 2 RuvA tetramers; dsDNA enters through RuvA and exits via RuvB. An RuvB hexamer assembles on each DNA strand where it exits the tetramer. Each RuvB hexamer is contacted by two RuvA subunits (via domain III) on 2 adjacent RuvB subunits; this complex drives branch migration. In the full resolvosome a probable DNA-RuvA(4)-RuvB(12)-RuvC(2) complex forms which resolves the HJ.</text>
</comment>
<comment type="subcellular location">
    <subcellularLocation>
        <location evidence="1">Cytoplasm</location>
    </subcellularLocation>
</comment>
<comment type="domain">
    <text evidence="1">Has 3 domains, the large (RuvB-L) and small ATPase (RuvB-S) domains and the C-terminal head (RuvB-H) domain. The head domain binds DNA, while the ATPase domains jointly bind ATP, ADP or are empty depending on the state of the subunit in the translocation cycle. During a single DNA translocation step the structure of each domain remains the same, but their relative positions change.</text>
</comment>
<comment type="similarity">
    <text evidence="1">Belongs to the RuvB family.</text>
</comment>
<organism>
    <name type="scientific">Shewanella amazonensis (strain ATCC BAA-1098 / SB2B)</name>
    <dbReference type="NCBI Taxonomy" id="326297"/>
    <lineage>
        <taxon>Bacteria</taxon>
        <taxon>Pseudomonadati</taxon>
        <taxon>Pseudomonadota</taxon>
        <taxon>Gammaproteobacteria</taxon>
        <taxon>Alteromonadales</taxon>
        <taxon>Shewanellaceae</taxon>
        <taxon>Shewanella</taxon>
    </lineage>
</organism>
<gene>
    <name evidence="1" type="primary">ruvB</name>
    <name type="ordered locus">Sama_1839</name>
</gene>
<reference key="1">
    <citation type="submission" date="2006-12" db="EMBL/GenBank/DDBJ databases">
        <title>Complete sequence of Shewanella amazonensis SB2B.</title>
        <authorList>
            <consortium name="US DOE Joint Genome Institute"/>
            <person name="Copeland A."/>
            <person name="Lucas S."/>
            <person name="Lapidus A."/>
            <person name="Barry K."/>
            <person name="Detter J.C."/>
            <person name="Glavina del Rio T."/>
            <person name="Hammon N."/>
            <person name="Israni S."/>
            <person name="Dalin E."/>
            <person name="Tice H."/>
            <person name="Pitluck S."/>
            <person name="Munk A.C."/>
            <person name="Brettin T."/>
            <person name="Bruce D."/>
            <person name="Han C."/>
            <person name="Tapia R."/>
            <person name="Gilna P."/>
            <person name="Schmutz J."/>
            <person name="Larimer F."/>
            <person name="Land M."/>
            <person name="Hauser L."/>
            <person name="Kyrpides N."/>
            <person name="Mikhailova N."/>
            <person name="Fredrickson J."/>
            <person name="Richardson P."/>
        </authorList>
    </citation>
    <scope>NUCLEOTIDE SEQUENCE [LARGE SCALE GENOMIC DNA]</scope>
    <source>
        <strain>ATCC BAA-1098 / SB2B</strain>
    </source>
</reference>
<protein>
    <recommendedName>
        <fullName evidence="1">Holliday junction branch migration complex subunit RuvB</fullName>
        <ecNumber evidence="1">3.6.4.-</ecNumber>
    </recommendedName>
</protein>
<sequence>MIEADRLIQPQDLGQEDVIDRAMRPKLLDEYTGQDDTRAQLKVFIEAAKKRGEALDHMLIYGPPGLGKTTLANIVANEMGVNIKSTSGPVLEKAGDLAALLTNLEEGDVLFIDEIHRLSPVVEEILYPAMEDYQLDIMIGEGPAARSIKLDLPPFTLVGATTRAGSLTSPLRARFGIPLRLEFYNVRDLSSIVARSAKVMDVPMDEGGAEEIARRSRGTPRIANRLLRRVRDFAEVKHDGAISRAVAQSALDLLDVDSEGFDYMDRKLLLAIIDKFMGGPVGLDNLAAAIGEERETIEDVLEPFLIQQGFVQRTPRGRIATARAYSHFDLIKPD</sequence>
<keyword id="KW-0067">ATP-binding</keyword>
<keyword id="KW-0963">Cytoplasm</keyword>
<keyword id="KW-0227">DNA damage</keyword>
<keyword id="KW-0233">DNA recombination</keyword>
<keyword id="KW-0234">DNA repair</keyword>
<keyword id="KW-0238">DNA-binding</keyword>
<keyword id="KW-0378">Hydrolase</keyword>
<keyword id="KW-0547">Nucleotide-binding</keyword>
<keyword id="KW-1185">Reference proteome</keyword>
<accession>A1S6N8</accession>
<proteinExistence type="inferred from homology"/>
<name>RUVB_SHEAM</name>